<evidence type="ECO:0000255" key="1">
    <source>
        <dbReference type="HAMAP-Rule" id="MF_00402"/>
    </source>
</evidence>
<evidence type="ECO:0000305" key="2"/>
<gene>
    <name evidence="1" type="primary">rplS</name>
    <name type="ordered locus">Plav_1422</name>
</gene>
<dbReference type="EMBL" id="CP000774">
    <property type="protein sequence ID" value="ABS63042.1"/>
    <property type="molecule type" value="Genomic_DNA"/>
</dbReference>
<dbReference type="RefSeq" id="WP_012110319.1">
    <property type="nucleotide sequence ID" value="NC_009719.1"/>
</dbReference>
<dbReference type="SMR" id="A7HT09"/>
<dbReference type="STRING" id="402881.Plav_1422"/>
<dbReference type="KEGG" id="pla:Plav_1422"/>
<dbReference type="eggNOG" id="COG0335">
    <property type="taxonomic scope" value="Bacteria"/>
</dbReference>
<dbReference type="HOGENOM" id="CLU_103507_2_1_5"/>
<dbReference type="OrthoDB" id="9803541at2"/>
<dbReference type="Proteomes" id="UP000006377">
    <property type="component" value="Chromosome"/>
</dbReference>
<dbReference type="GO" id="GO:0022625">
    <property type="term" value="C:cytosolic large ribosomal subunit"/>
    <property type="evidence" value="ECO:0007669"/>
    <property type="project" value="TreeGrafter"/>
</dbReference>
<dbReference type="GO" id="GO:0003735">
    <property type="term" value="F:structural constituent of ribosome"/>
    <property type="evidence" value="ECO:0007669"/>
    <property type="project" value="InterPro"/>
</dbReference>
<dbReference type="GO" id="GO:0006412">
    <property type="term" value="P:translation"/>
    <property type="evidence" value="ECO:0007669"/>
    <property type="project" value="UniProtKB-UniRule"/>
</dbReference>
<dbReference type="FunFam" id="2.30.30.790:FF:000001">
    <property type="entry name" value="50S ribosomal protein L19"/>
    <property type="match status" value="1"/>
</dbReference>
<dbReference type="Gene3D" id="2.30.30.790">
    <property type="match status" value="1"/>
</dbReference>
<dbReference type="HAMAP" id="MF_00402">
    <property type="entry name" value="Ribosomal_bL19"/>
    <property type="match status" value="1"/>
</dbReference>
<dbReference type="InterPro" id="IPR001857">
    <property type="entry name" value="Ribosomal_bL19"/>
</dbReference>
<dbReference type="InterPro" id="IPR018257">
    <property type="entry name" value="Ribosomal_bL19_CS"/>
</dbReference>
<dbReference type="InterPro" id="IPR038657">
    <property type="entry name" value="Ribosomal_bL19_sf"/>
</dbReference>
<dbReference type="InterPro" id="IPR008991">
    <property type="entry name" value="Translation_prot_SH3-like_sf"/>
</dbReference>
<dbReference type="NCBIfam" id="TIGR01024">
    <property type="entry name" value="rplS_bact"/>
    <property type="match status" value="1"/>
</dbReference>
<dbReference type="PANTHER" id="PTHR15680:SF9">
    <property type="entry name" value="LARGE RIBOSOMAL SUBUNIT PROTEIN BL19M"/>
    <property type="match status" value="1"/>
</dbReference>
<dbReference type="PANTHER" id="PTHR15680">
    <property type="entry name" value="RIBOSOMAL PROTEIN L19"/>
    <property type="match status" value="1"/>
</dbReference>
<dbReference type="Pfam" id="PF01245">
    <property type="entry name" value="Ribosomal_L19"/>
    <property type="match status" value="1"/>
</dbReference>
<dbReference type="PIRSF" id="PIRSF002191">
    <property type="entry name" value="Ribosomal_L19"/>
    <property type="match status" value="1"/>
</dbReference>
<dbReference type="PRINTS" id="PR00061">
    <property type="entry name" value="RIBOSOMALL19"/>
</dbReference>
<dbReference type="SUPFAM" id="SSF50104">
    <property type="entry name" value="Translation proteins SH3-like domain"/>
    <property type="match status" value="1"/>
</dbReference>
<dbReference type="PROSITE" id="PS01015">
    <property type="entry name" value="RIBOSOMAL_L19"/>
    <property type="match status" value="1"/>
</dbReference>
<organism>
    <name type="scientific">Parvibaculum lavamentivorans (strain DS-1 / DSM 13023 / NCIMB 13966)</name>
    <dbReference type="NCBI Taxonomy" id="402881"/>
    <lineage>
        <taxon>Bacteria</taxon>
        <taxon>Pseudomonadati</taxon>
        <taxon>Pseudomonadota</taxon>
        <taxon>Alphaproteobacteria</taxon>
        <taxon>Hyphomicrobiales</taxon>
        <taxon>Parvibaculaceae</taxon>
        <taxon>Parvibaculum</taxon>
    </lineage>
</organism>
<reference key="1">
    <citation type="journal article" date="2011" name="Stand. Genomic Sci.">
        <title>Complete genome sequence of Parvibaculum lavamentivorans type strain (DS-1(T)).</title>
        <authorList>
            <person name="Schleheck D."/>
            <person name="Weiss M."/>
            <person name="Pitluck S."/>
            <person name="Bruce D."/>
            <person name="Land M.L."/>
            <person name="Han S."/>
            <person name="Saunders E."/>
            <person name="Tapia R."/>
            <person name="Detter C."/>
            <person name="Brettin T."/>
            <person name="Han J."/>
            <person name="Woyke T."/>
            <person name="Goodwin L."/>
            <person name="Pennacchio L."/>
            <person name="Nolan M."/>
            <person name="Cook A.M."/>
            <person name="Kjelleberg S."/>
            <person name="Thomas T."/>
        </authorList>
    </citation>
    <scope>NUCLEOTIDE SEQUENCE [LARGE SCALE GENOMIC DNA]</scope>
    <source>
        <strain>DS-1 / DSM 13023 / NCIMB 13966</strain>
    </source>
</reference>
<proteinExistence type="inferred from homology"/>
<keyword id="KW-1185">Reference proteome</keyword>
<keyword id="KW-0687">Ribonucleoprotein</keyword>
<keyword id="KW-0689">Ribosomal protein</keyword>
<accession>A7HT09</accession>
<name>RL19_PARL1</name>
<protein>
    <recommendedName>
        <fullName evidence="1">Large ribosomal subunit protein bL19</fullName>
    </recommendedName>
    <alternativeName>
        <fullName evidence="2">50S ribosomal protein L19</fullName>
    </alternativeName>
</protein>
<comment type="function">
    <text evidence="1">This protein is located at the 30S-50S ribosomal subunit interface and may play a role in the structure and function of the aminoacyl-tRNA binding site.</text>
</comment>
<comment type="similarity">
    <text evidence="1">Belongs to the bacterial ribosomal protein bL19 family.</text>
</comment>
<feature type="chain" id="PRO_1000072249" description="Large ribosomal subunit protein bL19">
    <location>
        <begin position="1"/>
        <end position="130"/>
    </location>
</feature>
<sequence length="130" mass="14443">MNIIEQIDQEQMATLTGGKTIPDFAPGDTLQVNVKVVEGTRERLQAYEGVCIARAGGGINENFTVRKISYGEGVERVFPLYSPLVDSIKVVRKGRVRRAKLYYLRGLRGKAARITEKKQDKTRSQETGAA</sequence>